<proteinExistence type="inferred from homology"/>
<organismHost>
    <name type="scientific">Choristoneura fumiferana</name>
    <name type="common">Spruce budworm moth</name>
    <name type="synonym">Archips fumiferana</name>
    <dbReference type="NCBI Taxonomy" id="7141"/>
</organismHost>
<name>KITH_CBEPV</name>
<sequence>MSIEIITGPMYSGKTTELIRRITRYKLCKKNCVIISHSIDNRCEEDDNILINHDGFKISHDDFIKTNILINKIKIFDKYEIIGIDECQFFDSNDLMIFCDTLANNGKKIIVAGLNSDFNKNPFKSIIKLIPISEKITKLQSICNFCYNDATFTMKKFNKDIIIEIGGSDLYIPVCRICYNENNTIN</sequence>
<evidence type="ECO:0000250" key="1"/>
<evidence type="ECO:0000255" key="2"/>
<evidence type="ECO:0000305" key="3"/>
<feature type="chain" id="PRO_0000174943" description="Thymidine kinase">
    <location>
        <begin position="1"/>
        <end position="186"/>
    </location>
</feature>
<feature type="active site" description="Proton acceptor" evidence="2">
    <location>
        <position position="86"/>
    </location>
</feature>
<feature type="binding site" evidence="1">
    <location>
        <begin position="8"/>
        <end position="15"/>
    </location>
    <ligand>
        <name>ATP</name>
        <dbReference type="ChEBI" id="CHEBI:30616"/>
    </ligand>
</feature>
<feature type="binding site" evidence="1">
    <location>
        <position position="118"/>
    </location>
    <ligand>
        <name>substrate</name>
    </ligand>
</feature>
<feature type="binding site" evidence="1">
    <location>
        <position position="143"/>
    </location>
    <ligand>
        <name>Zn(2+)</name>
        <dbReference type="ChEBI" id="CHEBI:29105"/>
    </ligand>
</feature>
<feature type="binding site" evidence="1">
    <location>
        <position position="146"/>
    </location>
    <ligand>
        <name>Zn(2+)</name>
        <dbReference type="ChEBI" id="CHEBI:29105"/>
    </ligand>
</feature>
<feature type="binding site" evidence="1">
    <location>
        <begin position="162"/>
        <end position="166"/>
    </location>
    <ligand>
        <name>substrate</name>
    </ligand>
</feature>
<feature type="binding site" evidence="1">
    <location>
        <position position="175"/>
    </location>
    <ligand>
        <name>Zn(2+)</name>
        <dbReference type="ChEBI" id="CHEBI:29105"/>
    </ligand>
</feature>
<feature type="binding site" evidence="1">
    <location>
        <position position="178"/>
    </location>
    <ligand>
        <name>Zn(2+)</name>
        <dbReference type="ChEBI" id="CHEBI:29105"/>
    </ligand>
</feature>
<organism>
    <name type="scientific">Choristoneura biennis entomopoxvirus</name>
    <name type="common">CbEPV</name>
    <dbReference type="NCBI Taxonomy" id="10288"/>
    <lineage>
        <taxon>Viruses</taxon>
        <taxon>Varidnaviria</taxon>
        <taxon>Bamfordvirae</taxon>
        <taxon>Nucleocytoviricota</taxon>
        <taxon>Pokkesviricetes</taxon>
        <taxon>Chitovirales</taxon>
        <taxon>Poxviridae</taxon>
        <taxon>Entomopoxvirinae</taxon>
        <taxon>Betaentomopoxvirus</taxon>
    </lineage>
</organism>
<comment type="catalytic activity">
    <reaction>
        <text>thymidine + ATP = dTMP + ADP + H(+)</text>
        <dbReference type="Rhea" id="RHEA:19129"/>
        <dbReference type="ChEBI" id="CHEBI:15378"/>
        <dbReference type="ChEBI" id="CHEBI:17748"/>
        <dbReference type="ChEBI" id="CHEBI:30616"/>
        <dbReference type="ChEBI" id="CHEBI:63528"/>
        <dbReference type="ChEBI" id="CHEBI:456216"/>
        <dbReference type="EC" id="2.7.1.21"/>
    </reaction>
</comment>
<comment type="similarity">
    <text evidence="3">Belongs to the thymidine kinase family.</text>
</comment>
<protein>
    <recommendedName>
        <fullName>Thymidine kinase</fullName>
        <ecNumber>2.7.1.21</ecNumber>
    </recommendedName>
</protein>
<dbReference type="EC" id="2.7.1.21"/>
<dbReference type="EMBL" id="D10680">
    <property type="protein sequence ID" value="BAA01526.1"/>
    <property type="molecule type" value="Genomic_DNA"/>
</dbReference>
<dbReference type="PIR" id="JQ1922">
    <property type="entry name" value="JQ1922"/>
</dbReference>
<dbReference type="RefSeq" id="YP_008004114.1">
    <property type="nucleotide sequence ID" value="NC_021248.1"/>
</dbReference>
<dbReference type="SMR" id="Q05879"/>
<dbReference type="KEGG" id="vg:15613034"/>
<dbReference type="OrthoDB" id="9611at10239"/>
<dbReference type="GO" id="GO:0005524">
    <property type="term" value="F:ATP binding"/>
    <property type="evidence" value="ECO:0007669"/>
    <property type="project" value="UniProtKB-KW"/>
</dbReference>
<dbReference type="GO" id="GO:0046872">
    <property type="term" value="F:metal ion binding"/>
    <property type="evidence" value="ECO:0007669"/>
    <property type="project" value="UniProtKB-KW"/>
</dbReference>
<dbReference type="GO" id="GO:0004797">
    <property type="term" value="F:thymidine kinase activity"/>
    <property type="evidence" value="ECO:0007669"/>
    <property type="project" value="UniProtKB-EC"/>
</dbReference>
<dbReference type="GO" id="GO:0071897">
    <property type="term" value="P:DNA biosynthetic process"/>
    <property type="evidence" value="ECO:0007669"/>
    <property type="project" value="UniProtKB-KW"/>
</dbReference>
<dbReference type="GO" id="GO:0046104">
    <property type="term" value="P:thymidine metabolic process"/>
    <property type="evidence" value="ECO:0007669"/>
    <property type="project" value="TreeGrafter"/>
</dbReference>
<dbReference type="FunFam" id="3.40.50.300:FF:000948">
    <property type="entry name" value="Thymidine kinase"/>
    <property type="match status" value="1"/>
</dbReference>
<dbReference type="Gene3D" id="3.30.60.20">
    <property type="match status" value="1"/>
</dbReference>
<dbReference type="Gene3D" id="3.40.50.300">
    <property type="entry name" value="P-loop containing nucleotide triphosphate hydrolases"/>
    <property type="match status" value="1"/>
</dbReference>
<dbReference type="InterPro" id="IPR027417">
    <property type="entry name" value="P-loop_NTPase"/>
</dbReference>
<dbReference type="InterPro" id="IPR001267">
    <property type="entry name" value="Thymidine_kinase"/>
</dbReference>
<dbReference type="InterPro" id="IPR020633">
    <property type="entry name" value="Thymidine_kinase_CS"/>
</dbReference>
<dbReference type="PANTHER" id="PTHR11441">
    <property type="entry name" value="THYMIDINE KINASE"/>
    <property type="match status" value="1"/>
</dbReference>
<dbReference type="PANTHER" id="PTHR11441:SF0">
    <property type="entry name" value="THYMIDINE KINASE, CYTOSOLIC"/>
    <property type="match status" value="1"/>
</dbReference>
<dbReference type="Pfam" id="PF00265">
    <property type="entry name" value="TK"/>
    <property type="match status" value="1"/>
</dbReference>
<dbReference type="PIRSF" id="PIRSF035805">
    <property type="entry name" value="TK_cell"/>
    <property type="match status" value="1"/>
</dbReference>
<dbReference type="SUPFAM" id="SSF57716">
    <property type="entry name" value="Glucocorticoid receptor-like (DNA-binding domain)"/>
    <property type="match status" value="1"/>
</dbReference>
<dbReference type="SUPFAM" id="SSF52540">
    <property type="entry name" value="P-loop containing nucleoside triphosphate hydrolases"/>
    <property type="match status" value="1"/>
</dbReference>
<dbReference type="PROSITE" id="PS00603">
    <property type="entry name" value="TK_CELLULAR_TYPE"/>
    <property type="match status" value="1"/>
</dbReference>
<gene>
    <name type="primary">TK</name>
</gene>
<keyword id="KW-0067">ATP-binding</keyword>
<keyword id="KW-0237">DNA synthesis</keyword>
<keyword id="KW-0418">Kinase</keyword>
<keyword id="KW-0479">Metal-binding</keyword>
<keyword id="KW-0547">Nucleotide-binding</keyword>
<keyword id="KW-0808">Transferase</keyword>
<keyword id="KW-0862">Zinc</keyword>
<accession>Q05879</accession>
<reference key="1">
    <citation type="journal article" date="1992" name="J. Gen. Virol.">
        <title>Comparison of the thymidine kinase genes from three entomopoxviruses.</title>
        <authorList>
            <person name="Lytvyn V."/>
            <person name="Fortin Y."/>
            <person name="Banville M."/>
            <person name="Arif B."/>
            <person name="Richardson C."/>
        </authorList>
    </citation>
    <scope>NUCLEOTIDE SEQUENCE [GENOMIC DNA]</scope>
</reference>